<gene>
    <name type="primary">SLC5A3</name>
    <name type="synonym">SMIT</name>
</gene>
<proteinExistence type="inferred from homology"/>
<sequence length="718" mass="79674">MRAVLETADIAIVALYFILVMCIGFFAMWKSNRSTVSGYFLAGRSMTWVAIGASLFVSNIGSEHFIGLAGSGAASGFAVGAWEFNALLLLQLLGWVFIPIYIRSGVYTMPEYLSKRFGGHRIQVYFAALSLILYIFTKLSVDLYSGALFIQESMGWNLYVSVILLIGMTALLTVTGGLVAVIYTDTLQALLMIVGALTLMVISMMEIGGFEEVKRRYMLASPNVTSILLTYNLSNTNSCNVHPKKDALKMLRNPTDEDVPWPGFILGQTPASVWYWCADQVIVQRVLAAKNIAHAKGSTLMAGFLKLLPMFIIVVPGMISRILFADDIACINPEHCMQVCGSRAGCSNIAYPRLVMKLVPVGLRGLMMAVMIAALMSDLDSIFNSASTIFTLDVYKLIRKSASSRELMIVGRIFVAFMVVISIAWVPIIVEMQGGQMYLYIQEVADYLTPPVAALFLLAIFWKRCNEQGAFYGGMAGFILVVVRLTLAFAYRAPECDQPDNRPVFIKDIHYMYVATALFWITGLITVIVSLLTPPPTKEQIRTTTFWSKKSLVVKESCSPKDEPYKMQEKSILRCSENSEVINHVIPNGKSEDSIKGLQPEDVNLLVTCREEGNPVASLGHSEAETPVDAYSNGQAALMGEKERKKEAEDGSRYWKFIDWFCGFKSKSLSKRSLRDLMEEEAVCLQMLEEPPQVKVILNIGLFGVCSLGIFMFVYFSL</sequence>
<name>SC5A3_BOVIN</name>
<feature type="chain" id="PRO_0000105379" description="Sodium/myo-inositol cotransporter">
    <location>
        <begin position="1"/>
        <end position="718"/>
    </location>
</feature>
<feature type="topological domain" description="Extracellular" evidence="5">
    <location>
        <begin position="1"/>
        <end position="9"/>
    </location>
</feature>
<feature type="transmembrane region" description="Helical" evidence="5">
    <location>
        <begin position="10"/>
        <end position="29"/>
    </location>
</feature>
<feature type="topological domain" description="Cytoplasmic" evidence="5">
    <location>
        <begin position="30"/>
        <end position="38"/>
    </location>
</feature>
<feature type="transmembrane region" description="Helical" evidence="5">
    <location>
        <begin position="39"/>
        <end position="57"/>
    </location>
</feature>
<feature type="topological domain" description="Extracellular" evidence="5">
    <location>
        <begin position="58"/>
        <end position="86"/>
    </location>
</feature>
<feature type="transmembrane region" description="Helical" evidence="5">
    <location>
        <begin position="87"/>
        <end position="110"/>
    </location>
</feature>
<feature type="topological domain" description="Cytoplasmic" evidence="5">
    <location>
        <begin position="111"/>
        <end position="123"/>
    </location>
</feature>
<feature type="transmembrane region" description="Helical" evidence="5">
    <location>
        <begin position="124"/>
        <end position="144"/>
    </location>
</feature>
<feature type="topological domain" description="Extracellular" evidence="5">
    <location>
        <begin position="145"/>
        <end position="157"/>
    </location>
</feature>
<feature type="transmembrane region" description="Helical" evidence="5">
    <location>
        <begin position="158"/>
        <end position="183"/>
    </location>
</feature>
<feature type="topological domain" description="Cytoplasmic" evidence="5">
    <location>
        <begin position="184"/>
        <end position="186"/>
    </location>
</feature>
<feature type="transmembrane region" description="Helical" evidence="5">
    <location>
        <begin position="187"/>
        <end position="205"/>
    </location>
</feature>
<feature type="topological domain" description="Extracellular" evidence="5">
    <location>
        <begin position="206"/>
        <end position="303"/>
    </location>
</feature>
<feature type="transmembrane region" description="Helical" evidence="5">
    <location>
        <begin position="304"/>
        <end position="324"/>
    </location>
</feature>
<feature type="topological domain" description="Cytoplasmic" evidence="5">
    <location>
        <begin position="325"/>
        <end position="353"/>
    </location>
</feature>
<feature type="transmembrane region" description="Helical" evidence="5">
    <location>
        <begin position="354"/>
        <end position="376"/>
    </location>
</feature>
<feature type="topological domain" description="Extracellular" evidence="5">
    <location>
        <begin position="377"/>
        <end position="406"/>
    </location>
</feature>
<feature type="transmembrane region" description="Helical" evidence="5">
    <location>
        <begin position="407"/>
        <end position="430"/>
    </location>
</feature>
<feature type="topological domain" description="Cytoplasmic" evidence="5">
    <location>
        <begin position="431"/>
        <end position="443"/>
    </location>
</feature>
<feature type="transmembrane region" description="Helical" evidence="5">
    <location>
        <begin position="444"/>
        <end position="462"/>
    </location>
</feature>
<feature type="topological domain" description="Extracellular" evidence="5">
    <location>
        <begin position="463"/>
        <end position="510"/>
    </location>
</feature>
<feature type="transmembrane region" description="Helical" evidence="5">
    <location>
        <begin position="511"/>
        <end position="532"/>
    </location>
</feature>
<feature type="topological domain" description="Cytoplasmic" evidence="5">
    <location>
        <begin position="533"/>
        <end position="695"/>
    </location>
</feature>
<feature type="transmembrane region" description="Helical" evidence="5">
    <location>
        <begin position="696"/>
        <end position="716"/>
    </location>
</feature>
<feature type="topological domain" description="Extracellular" evidence="5">
    <location>
        <begin position="717"/>
        <end position="718"/>
    </location>
</feature>
<feature type="site" description="Implicated in sodium coupling" evidence="1">
    <location>
        <position position="24"/>
    </location>
</feature>
<feature type="site" description="Implicated in sodium coupling" evidence="1">
    <location>
        <position position="285"/>
    </location>
</feature>
<feature type="modified residue" description="Phosphoserine" evidence="3">
    <location>
        <position position="594"/>
    </location>
</feature>
<feature type="modified residue" description="Phosphoserine" evidence="3">
    <location>
        <position position="632"/>
    </location>
</feature>
<feature type="glycosylation site" description="N-linked (GlcNAc...) asparagine" evidence="5">
    <location>
        <position position="232"/>
    </location>
</feature>
<keyword id="KW-1003">Cell membrane</keyword>
<keyword id="KW-0325">Glycoprotein</keyword>
<keyword id="KW-0406">Ion transport</keyword>
<keyword id="KW-0472">Membrane</keyword>
<keyword id="KW-0597">Phosphoprotein</keyword>
<keyword id="KW-1185">Reference proteome</keyword>
<keyword id="KW-0915">Sodium</keyword>
<keyword id="KW-0739">Sodium transport</keyword>
<keyword id="KW-0769">Symport</keyword>
<keyword id="KW-0812">Transmembrane</keyword>
<keyword id="KW-1133">Transmembrane helix</keyword>
<keyword id="KW-0813">Transport</keyword>
<reference key="1">
    <citation type="journal article" date="1996" name="Mamm. Genome">
        <title>Multiple comparison of primary structure of the osmoregulatory Na+/myo-inositol cotransporter from bovine, human, and canine species.</title>
        <authorList>
            <person name="Mallee J.J."/>
            <person name="Parrella T."/>
            <person name="Kwon H.M."/>
            <person name="Berry G.T."/>
        </authorList>
    </citation>
    <scope>NUCLEOTIDE SEQUENCE [GENOMIC DNA]</scope>
</reference>
<reference key="2">
    <citation type="submission" date="1995-11" db="EMBL/GenBank/DDBJ databases">
        <authorList>
            <person name="Mallee J.J."/>
        </authorList>
    </citation>
    <scope>NUCLEOTIDE SEQUENCE [GENOMIC DNA]</scope>
</reference>
<protein>
    <recommendedName>
        <fullName>Sodium/myo-inositol cotransporter</fullName>
        <shortName>Na(+)/myo-inositol cotransporter</shortName>
    </recommendedName>
    <alternativeName>
        <fullName>Sodium/myo-inositol transporter 1</fullName>
        <shortName>SMIT1</shortName>
    </alternativeName>
    <alternativeName>
        <fullName>Solute carrier family 5 member 3</fullName>
    </alternativeName>
</protein>
<dbReference type="EMBL" id="U41338">
    <property type="protein sequence ID" value="AAA93188.1"/>
    <property type="molecule type" value="Genomic_DNA"/>
</dbReference>
<dbReference type="RefSeq" id="NP_777032.1">
    <property type="nucleotide sequence ID" value="NM_174607.1"/>
</dbReference>
<dbReference type="SMR" id="P53793"/>
<dbReference type="FunCoup" id="P53793">
    <property type="interactions" value="276"/>
</dbReference>
<dbReference type="GlyCosmos" id="P53793">
    <property type="glycosylation" value="1 site, No reported glycans"/>
</dbReference>
<dbReference type="GlyGen" id="P53793">
    <property type="glycosylation" value="1 site"/>
</dbReference>
<dbReference type="GeneID" id="282362"/>
<dbReference type="KEGG" id="bta:282362"/>
<dbReference type="CTD" id="6526"/>
<dbReference type="InParanoid" id="P53793"/>
<dbReference type="OrthoDB" id="6132759at2759"/>
<dbReference type="Proteomes" id="UP000009136">
    <property type="component" value="Unplaced"/>
</dbReference>
<dbReference type="GO" id="GO:0016324">
    <property type="term" value="C:apical plasma membrane"/>
    <property type="evidence" value="ECO:0007669"/>
    <property type="project" value="UniProtKB-SubCell"/>
</dbReference>
<dbReference type="GO" id="GO:0016323">
    <property type="term" value="C:basolateral plasma membrane"/>
    <property type="evidence" value="ECO:0007669"/>
    <property type="project" value="UniProtKB-SubCell"/>
</dbReference>
<dbReference type="GO" id="GO:0005886">
    <property type="term" value="C:plasma membrane"/>
    <property type="evidence" value="ECO:0000318"/>
    <property type="project" value="GO_Central"/>
</dbReference>
<dbReference type="GO" id="GO:0005412">
    <property type="term" value="F:D-glucose:sodium symporter activity"/>
    <property type="evidence" value="ECO:0000318"/>
    <property type="project" value="GO_Central"/>
</dbReference>
<dbReference type="GO" id="GO:0006020">
    <property type="term" value="P:inositol metabolic process"/>
    <property type="evidence" value="ECO:0000318"/>
    <property type="project" value="GO_Central"/>
</dbReference>
<dbReference type="GO" id="GO:0015798">
    <property type="term" value="P:myo-inositol transport"/>
    <property type="evidence" value="ECO:0000318"/>
    <property type="project" value="GO_Central"/>
</dbReference>
<dbReference type="CDD" id="cd11491">
    <property type="entry name" value="SLC5sbd_SMIT"/>
    <property type="match status" value="1"/>
</dbReference>
<dbReference type="FunFam" id="1.20.1730.10:FF:000013">
    <property type="entry name" value="sodium/myo-inositol cotransporter isoform X1"/>
    <property type="match status" value="1"/>
</dbReference>
<dbReference type="Gene3D" id="1.20.1730.10">
    <property type="entry name" value="Sodium/glucose cotransporter"/>
    <property type="match status" value="1"/>
</dbReference>
<dbReference type="InterPro" id="IPR038377">
    <property type="entry name" value="Na/Glc_symporter_sf"/>
</dbReference>
<dbReference type="InterPro" id="IPR001734">
    <property type="entry name" value="Na/solute_symporter"/>
</dbReference>
<dbReference type="InterPro" id="IPR018212">
    <property type="entry name" value="Na/solute_symporter_CS"/>
</dbReference>
<dbReference type="InterPro" id="IPR042731">
    <property type="entry name" value="SMIT"/>
</dbReference>
<dbReference type="NCBIfam" id="TIGR00813">
    <property type="entry name" value="sss"/>
    <property type="match status" value="1"/>
</dbReference>
<dbReference type="PANTHER" id="PTHR11819:SF150">
    <property type="entry name" value="SODIUM_MYO-INOSITOL COTRANSPORTER"/>
    <property type="match status" value="1"/>
</dbReference>
<dbReference type="PANTHER" id="PTHR11819">
    <property type="entry name" value="SOLUTE CARRIER FAMILY 5"/>
    <property type="match status" value="1"/>
</dbReference>
<dbReference type="Pfam" id="PF00474">
    <property type="entry name" value="SSF"/>
    <property type="match status" value="1"/>
</dbReference>
<dbReference type="PROSITE" id="PS00456">
    <property type="entry name" value="NA_SOLUT_SYMP_1"/>
    <property type="match status" value="1"/>
</dbReference>
<dbReference type="PROSITE" id="PS00457">
    <property type="entry name" value="NA_SOLUT_SYMP_2"/>
    <property type="match status" value="1"/>
</dbReference>
<dbReference type="PROSITE" id="PS50283">
    <property type="entry name" value="NA_SOLUT_SYMP_3"/>
    <property type="match status" value="1"/>
</dbReference>
<evidence type="ECO:0000250" key="1"/>
<evidence type="ECO:0000250" key="2">
    <source>
        <dbReference type="UniProtKB" id="P31637"/>
    </source>
</evidence>
<evidence type="ECO:0000250" key="3">
    <source>
        <dbReference type="UniProtKB" id="P53794"/>
    </source>
</evidence>
<evidence type="ECO:0000250" key="4">
    <source>
        <dbReference type="UniProtKB" id="Q9JKZ2"/>
    </source>
</evidence>
<evidence type="ECO:0000255" key="5"/>
<evidence type="ECO:0000305" key="6"/>
<comment type="function">
    <text evidence="2 3 4">Electrogenic Na(+)-coupled sugar symporter that actively transports myo-inositol and its stereoisomer scyllo-inositol across the plasma membrane, with a Na(+) to sugar coupling ratio of 2:1 (By similarity). Maintains myo-inositol concentration gradient that defines cell volume and fluid balance during osmotic stress, in particular in the fetoplacental unit and central nervous system (By similarity). Forms coregulatory complexes with voltage-gated K(+) ion channels, allosterically altering ion selectivity, voltage dependence and gating kinetics of the channel. In turn, K(+) efflux through the channel forms a local electrical gradient that modulates electrogenic Na(+)-coupled myo-inositol influx through the transporter (By similarity). Associates with KCNQ1-KCNE2 channel in the apical membrane of choroid plexus epithelium and regulates the myo-inositol gradient between blood and cerebrospinal fluid with an impact on neuron excitability (By similarity). Associates with KCNQ2-KCNQ3 channel altering ion selectivity, increasing Na(+) and Cs(+) permeation relative to K(+) permeation (By similarity). Provides myo-inositol precursor for biosynthesis of phosphoinositides such as PI(4,5)P2, thus indirectly affecting the activity of phosphoinositide-dependent ion channels and Ca(2+) signaling upon osmotic stress (By similarity).</text>
</comment>
<comment type="subunit">
    <text evidence="3 4">Interacts with KCNQ2 (via the pore module) (By similarity). Interacts with KCNQ1; this interaction is direct (By similarity). Forms coregulatory complexes with ion channels KCNQ2-KCNQ3 and KCNQ1-KCNE2 (By similarity).</text>
</comment>
<comment type="subcellular location">
    <subcellularLocation>
        <location evidence="4">Apical cell membrane</location>
        <topology evidence="5">Multi-pass membrane protein</topology>
    </subcellularLocation>
    <subcellularLocation>
        <location evidence="4">Basolateral cell membrane</location>
        <topology evidence="5">Multi-pass membrane protein</topology>
    </subcellularLocation>
    <text evidence="4">Colocalizes with KCNQ1 at the apical membrane of choroid plexus epithelium.</text>
</comment>
<comment type="similarity">
    <text evidence="6">Belongs to the sodium:solute symporter (SSF) (TC 2.A.21) family.</text>
</comment>
<accession>P53793</accession>
<organism>
    <name type="scientific">Bos taurus</name>
    <name type="common">Bovine</name>
    <dbReference type="NCBI Taxonomy" id="9913"/>
    <lineage>
        <taxon>Eukaryota</taxon>
        <taxon>Metazoa</taxon>
        <taxon>Chordata</taxon>
        <taxon>Craniata</taxon>
        <taxon>Vertebrata</taxon>
        <taxon>Euteleostomi</taxon>
        <taxon>Mammalia</taxon>
        <taxon>Eutheria</taxon>
        <taxon>Laurasiatheria</taxon>
        <taxon>Artiodactyla</taxon>
        <taxon>Ruminantia</taxon>
        <taxon>Pecora</taxon>
        <taxon>Bovidae</taxon>
        <taxon>Bovinae</taxon>
        <taxon>Bos</taxon>
    </lineage>
</organism>